<protein>
    <recommendedName>
        <fullName evidence="1">Phosphoribosylformylglycinamidine cyclo-ligase</fullName>
        <ecNumber evidence="1">6.3.3.1</ecNumber>
    </recommendedName>
    <alternativeName>
        <fullName evidence="1">AIR synthase</fullName>
    </alternativeName>
    <alternativeName>
        <fullName evidence="1">AIRS</fullName>
    </alternativeName>
    <alternativeName>
        <fullName evidence="1">Phosphoribosyl-aminoimidazole synthetase</fullName>
    </alternativeName>
</protein>
<feature type="chain" id="PRO_1000193013" description="Phosphoribosylformylglycinamidine cyclo-ligase">
    <location>
        <begin position="1"/>
        <end position="350"/>
    </location>
</feature>
<proteinExistence type="inferred from homology"/>
<reference key="1">
    <citation type="submission" date="2008-10" db="EMBL/GenBank/DDBJ databases">
        <title>Complete sequence of Desulfovibrio vulgaris str. 'Miyazaki F'.</title>
        <authorList>
            <person name="Lucas S."/>
            <person name="Copeland A."/>
            <person name="Lapidus A."/>
            <person name="Glavina del Rio T."/>
            <person name="Dalin E."/>
            <person name="Tice H."/>
            <person name="Bruce D."/>
            <person name="Goodwin L."/>
            <person name="Pitluck S."/>
            <person name="Sims D."/>
            <person name="Brettin T."/>
            <person name="Detter J.C."/>
            <person name="Han C."/>
            <person name="Larimer F."/>
            <person name="Land M."/>
            <person name="Hauser L."/>
            <person name="Kyrpides N."/>
            <person name="Mikhailova N."/>
            <person name="Hazen T.C."/>
            <person name="Richardson P."/>
        </authorList>
    </citation>
    <scope>NUCLEOTIDE SEQUENCE [LARGE SCALE GENOMIC DNA]</scope>
    <source>
        <strain>DSM 19637 / Miyazaki F</strain>
    </source>
</reference>
<dbReference type="EC" id="6.3.3.1" evidence="1"/>
<dbReference type="EMBL" id="CP001197">
    <property type="protein sequence ID" value="ACL07162.1"/>
    <property type="molecule type" value="Genomic_DNA"/>
</dbReference>
<dbReference type="SMR" id="B8DNV5"/>
<dbReference type="STRING" id="883.DvMF_0202"/>
<dbReference type="KEGG" id="dvm:DvMF_0202"/>
<dbReference type="eggNOG" id="COG0150">
    <property type="taxonomic scope" value="Bacteria"/>
</dbReference>
<dbReference type="HOGENOM" id="CLU_047116_0_0_7"/>
<dbReference type="OrthoDB" id="9777881at2"/>
<dbReference type="UniPathway" id="UPA00074">
    <property type="reaction ID" value="UER00129"/>
</dbReference>
<dbReference type="GO" id="GO:0005829">
    <property type="term" value="C:cytosol"/>
    <property type="evidence" value="ECO:0007669"/>
    <property type="project" value="TreeGrafter"/>
</dbReference>
<dbReference type="GO" id="GO:0005524">
    <property type="term" value="F:ATP binding"/>
    <property type="evidence" value="ECO:0007669"/>
    <property type="project" value="UniProtKB-KW"/>
</dbReference>
<dbReference type="GO" id="GO:0004637">
    <property type="term" value="F:phosphoribosylamine-glycine ligase activity"/>
    <property type="evidence" value="ECO:0007669"/>
    <property type="project" value="TreeGrafter"/>
</dbReference>
<dbReference type="GO" id="GO:0004641">
    <property type="term" value="F:phosphoribosylformylglycinamidine cyclo-ligase activity"/>
    <property type="evidence" value="ECO:0007669"/>
    <property type="project" value="UniProtKB-UniRule"/>
</dbReference>
<dbReference type="GO" id="GO:0006189">
    <property type="term" value="P:'de novo' IMP biosynthetic process"/>
    <property type="evidence" value="ECO:0007669"/>
    <property type="project" value="UniProtKB-UniRule"/>
</dbReference>
<dbReference type="GO" id="GO:0046084">
    <property type="term" value="P:adenine biosynthetic process"/>
    <property type="evidence" value="ECO:0007669"/>
    <property type="project" value="TreeGrafter"/>
</dbReference>
<dbReference type="CDD" id="cd02196">
    <property type="entry name" value="PurM"/>
    <property type="match status" value="1"/>
</dbReference>
<dbReference type="FunFam" id="3.30.1330.10:FF:000001">
    <property type="entry name" value="Phosphoribosylformylglycinamidine cyclo-ligase"/>
    <property type="match status" value="1"/>
</dbReference>
<dbReference type="FunFam" id="3.90.650.10:FF:000011">
    <property type="entry name" value="Phosphoribosylformylglycinamidine cyclo-ligase"/>
    <property type="match status" value="1"/>
</dbReference>
<dbReference type="Gene3D" id="3.90.650.10">
    <property type="entry name" value="PurM-like C-terminal domain"/>
    <property type="match status" value="1"/>
</dbReference>
<dbReference type="Gene3D" id="3.30.1330.10">
    <property type="entry name" value="PurM-like, N-terminal domain"/>
    <property type="match status" value="1"/>
</dbReference>
<dbReference type="HAMAP" id="MF_00741">
    <property type="entry name" value="AIRS"/>
    <property type="match status" value="1"/>
</dbReference>
<dbReference type="InterPro" id="IPR010918">
    <property type="entry name" value="PurM-like_C_dom"/>
</dbReference>
<dbReference type="InterPro" id="IPR036676">
    <property type="entry name" value="PurM-like_C_sf"/>
</dbReference>
<dbReference type="InterPro" id="IPR016188">
    <property type="entry name" value="PurM-like_N"/>
</dbReference>
<dbReference type="InterPro" id="IPR036921">
    <property type="entry name" value="PurM-like_N_sf"/>
</dbReference>
<dbReference type="InterPro" id="IPR004733">
    <property type="entry name" value="PurM_cligase"/>
</dbReference>
<dbReference type="NCBIfam" id="TIGR00878">
    <property type="entry name" value="purM"/>
    <property type="match status" value="1"/>
</dbReference>
<dbReference type="PANTHER" id="PTHR10520:SF12">
    <property type="entry name" value="TRIFUNCTIONAL PURINE BIOSYNTHETIC PROTEIN ADENOSINE-3"/>
    <property type="match status" value="1"/>
</dbReference>
<dbReference type="PANTHER" id="PTHR10520">
    <property type="entry name" value="TRIFUNCTIONAL PURINE BIOSYNTHETIC PROTEIN ADENOSINE-3-RELATED"/>
    <property type="match status" value="1"/>
</dbReference>
<dbReference type="Pfam" id="PF00586">
    <property type="entry name" value="AIRS"/>
    <property type="match status" value="1"/>
</dbReference>
<dbReference type="Pfam" id="PF02769">
    <property type="entry name" value="AIRS_C"/>
    <property type="match status" value="1"/>
</dbReference>
<dbReference type="SUPFAM" id="SSF56042">
    <property type="entry name" value="PurM C-terminal domain-like"/>
    <property type="match status" value="1"/>
</dbReference>
<dbReference type="SUPFAM" id="SSF55326">
    <property type="entry name" value="PurM N-terminal domain-like"/>
    <property type="match status" value="1"/>
</dbReference>
<organism>
    <name type="scientific">Nitratidesulfovibrio vulgaris (strain DSM 19637 / Miyazaki F)</name>
    <name type="common">Desulfovibrio vulgaris</name>
    <dbReference type="NCBI Taxonomy" id="883"/>
    <lineage>
        <taxon>Bacteria</taxon>
        <taxon>Pseudomonadati</taxon>
        <taxon>Thermodesulfobacteriota</taxon>
        <taxon>Desulfovibrionia</taxon>
        <taxon>Desulfovibrionales</taxon>
        <taxon>Desulfovibrionaceae</taxon>
        <taxon>Nitratidesulfovibrio</taxon>
    </lineage>
</organism>
<accession>B8DNV5</accession>
<sequence length="350" mass="37201">MSEDRSKAYTDAGVDINAGNALVSRIKSIVARTHTNGVISDIGGFGGLFKPDLAGMDEPVLVSSTDGVGTKLKCAFQFGKHDTVGIDLVAMSVNDILVQGARPLFFLDYFATGKLDVDVAASVISGVAEGCRRASCALLGGETAEMPEMYAPGEYDLAGFCVGLVDNTRIVDGSSIRVGDSIIGIASTGLHSNGYSLARKVLAQSGLNGNDPLPGSDRTVAEVLLEPTAIYVDIVRSVMRDFAIKGMVHVTGGGFYDNIPRVLPATVEAHIDFGSWTVPPVFNWLLAQGNLTWPEMLQIFNCGIGYIMIVSPDVCDEVLGRVNAMHAQAWRIGSIGRRRDKAAEQVQVAF</sequence>
<comment type="catalytic activity">
    <reaction evidence="1">
        <text>2-formamido-N(1)-(5-O-phospho-beta-D-ribosyl)acetamidine + ATP = 5-amino-1-(5-phospho-beta-D-ribosyl)imidazole + ADP + phosphate + H(+)</text>
        <dbReference type="Rhea" id="RHEA:23032"/>
        <dbReference type="ChEBI" id="CHEBI:15378"/>
        <dbReference type="ChEBI" id="CHEBI:30616"/>
        <dbReference type="ChEBI" id="CHEBI:43474"/>
        <dbReference type="ChEBI" id="CHEBI:137981"/>
        <dbReference type="ChEBI" id="CHEBI:147287"/>
        <dbReference type="ChEBI" id="CHEBI:456216"/>
        <dbReference type="EC" id="6.3.3.1"/>
    </reaction>
</comment>
<comment type="pathway">
    <text evidence="1">Purine metabolism; IMP biosynthesis via de novo pathway; 5-amino-1-(5-phospho-D-ribosyl)imidazole from N(2)-formyl-N(1)-(5-phospho-D-ribosyl)glycinamide: step 2/2.</text>
</comment>
<comment type="subcellular location">
    <subcellularLocation>
        <location evidence="1">Cytoplasm</location>
    </subcellularLocation>
</comment>
<comment type="similarity">
    <text evidence="1">Belongs to the AIR synthase family.</text>
</comment>
<name>PUR5_NITV9</name>
<keyword id="KW-0067">ATP-binding</keyword>
<keyword id="KW-0963">Cytoplasm</keyword>
<keyword id="KW-0436">Ligase</keyword>
<keyword id="KW-0547">Nucleotide-binding</keyword>
<keyword id="KW-0658">Purine biosynthesis</keyword>
<gene>
    <name evidence="1" type="primary">purM</name>
    <name type="ordered locus">DvMF_0202</name>
</gene>
<evidence type="ECO:0000255" key="1">
    <source>
        <dbReference type="HAMAP-Rule" id="MF_00741"/>
    </source>
</evidence>